<protein>
    <recommendedName>
        <fullName>Hyaluronidase-4</fullName>
        <shortName>Hyal-4</shortName>
        <ecNumber>3.2.1.35</ecNumber>
    </recommendedName>
    <alternativeName>
        <fullName>Chondroitin sulfate endo-beta-N-acetylgalactosaminidase</fullName>
    </alternativeName>
    <alternativeName>
        <fullName>Chondroitin sulfate hydrolase</fullName>
        <shortName>CSHY</shortName>
    </alternativeName>
    <alternativeName>
        <fullName>Hyaluronoglucosaminidase-4</fullName>
    </alternativeName>
</protein>
<name>HYAL4_HUMAN</name>
<feature type="chain" id="PRO_0000301999" description="Hyaluronidase-4">
    <location>
        <begin position="1"/>
        <end position="481"/>
    </location>
</feature>
<feature type="topological domain" description="Cytoplasmic" evidence="2">
    <location>
        <begin position="1"/>
        <end position="8"/>
    </location>
</feature>
<feature type="transmembrane region" description="Helical" evidence="2">
    <location>
        <begin position="9"/>
        <end position="29"/>
    </location>
</feature>
<feature type="topological domain" description="Extracellular" evidence="2">
    <location>
        <begin position="30"/>
        <end position="453"/>
    </location>
</feature>
<feature type="transmembrane region" description="Helical" evidence="2">
    <location>
        <begin position="454"/>
        <end position="474"/>
    </location>
</feature>
<feature type="topological domain" description="Cytoplasmic" evidence="2">
    <location>
        <begin position="475"/>
        <end position="481"/>
    </location>
</feature>
<feature type="active site" description="Proton donor" evidence="1">
    <location>
        <position position="147"/>
    </location>
</feature>
<feature type="glycosylation site" description="N-linked (GlcNAc...) asparagine" evidence="2">
    <location>
        <position position="86"/>
    </location>
</feature>
<feature type="glycosylation site" description="N-linked (GlcNAc...) asparagine" evidence="2">
    <location>
        <position position="115"/>
    </location>
</feature>
<feature type="glycosylation site" description="N-linked (GlcNAc...) (complex) asparagine" evidence="6">
    <location>
        <position position="177"/>
    </location>
</feature>
<feature type="glycosylation site" description="N-linked (GlcNAc...) asparagine" evidence="2">
    <location>
        <position position="343"/>
    </location>
</feature>
<feature type="disulfide bond" evidence="1">
    <location>
        <begin position="59"/>
        <end position="351"/>
    </location>
</feature>
<feature type="disulfide bond" evidence="1">
    <location>
        <begin position="223"/>
        <end position="237"/>
    </location>
</feature>
<feature type="disulfide bond" evidence="1">
    <location>
        <begin position="376"/>
        <end position="387"/>
    </location>
</feature>
<feature type="disulfide bond" evidence="1">
    <location>
        <begin position="381"/>
        <end position="435"/>
    </location>
</feature>
<feature type="disulfide bond" evidence="1">
    <location>
        <begin position="437"/>
        <end position="446"/>
    </location>
</feature>
<feature type="sequence variant" id="VAR_034936" description="In dbSNP:rs6949082." evidence="4">
    <original>A</original>
    <variation>S</variation>
    <location>
        <position position="346"/>
    </location>
</feature>
<feature type="sequence conflict" description="In Ref. 1; AAC98883." evidence="8" ref="1">
    <original>G</original>
    <variation>C</variation>
    <location>
        <position position="263"/>
    </location>
</feature>
<gene>
    <name type="primary">HYAL4</name>
</gene>
<evidence type="ECO:0000250" key="1"/>
<evidence type="ECO:0000255" key="2"/>
<evidence type="ECO:0000269" key="3">
    <source>
    </source>
</evidence>
<evidence type="ECO:0000269" key="4">
    <source>
    </source>
</evidence>
<evidence type="ECO:0000269" key="5">
    <source>
    </source>
</evidence>
<evidence type="ECO:0000269" key="6">
    <source>
    </source>
</evidence>
<evidence type="ECO:0000269" key="7">
    <source>
    </source>
</evidence>
<evidence type="ECO:0000305" key="8"/>
<keyword id="KW-1015">Disulfide bond</keyword>
<keyword id="KW-0245">EGF-like domain</keyword>
<keyword id="KW-0325">Glycoprotein</keyword>
<keyword id="KW-0326">Glycosidase</keyword>
<keyword id="KW-0378">Hydrolase</keyword>
<keyword id="KW-0472">Membrane</keyword>
<keyword id="KW-1185">Reference proteome</keyword>
<keyword id="KW-0812">Transmembrane</keyword>
<keyword id="KW-1133">Transmembrane helix</keyword>
<reference key="1">
    <citation type="journal article" date="1999" name="Genomics">
        <title>Expression analysis of six paralogous human hyaluronidase genes clustered on chromosomes 3p21 and 7q31.</title>
        <authorList>
            <person name="Csoka A.B."/>
            <person name="Scherer S.W."/>
            <person name="Stern R."/>
        </authorList>
    </citation>
    <scope>NUCLEOTIDE SEQUENCE [MRNA]</scope>
    <scope>TISSUE SPECIFICITY</scope>
</reference>
<reference key="2">
    <citation type="journal article" date="2010" name="Glycobiology">
        <title>Identification of human hyaluronidase-4 as a novel chondroitin sulfate hydrolase that preferentially cleaves the galactosaminidic linkage in the trisulfated tetrasaccharide sequence.</title>
        <authorList>
            <person name="Kaneiwa T."/>
            <person name="Mizumoto S."/>
            <person name="Sugahara K."/>
            <person name="Yamada S."/>
        </authorList>
    </citation>
    <scope>NUCLEOTIDE SEQUENCE [MRNA]</scope>
    <scope>FUNCTION</scope>
    <scope>BIOPHYSICOCHEMICAL PROPERTIES</scope>
</reference>
<reference key="3">
    <citation type="journal article" date="2003" name="Nature">
        <title>The DNA sequence of human chromosome 7.</title>
        <authorList>
            <person name="Hillier L.W."/>
            <person name="Fulton R.S."/>
            <person name="Fulton L.A."/>
            <person name="Graves T.A."/>
            <person name="Pepin K.H."/>
            <person name="Wagner-McPherson C."/>
            <person name="Layman D."/>
            <person name="Maas J."/>
            <person name="Jaeger S."/>
            <person name="Walker R."/>
            <person name="Wylie K."/>
            <person name="Sekhon M."/>
            <person name="Becker M.C."/>
            <person name="O'Laughlin M.D."/>
            <person name="Schaller M.E."/>
            <person name="Fewell G.A."/>
            <person name="Delehaunty K.D."/>
            <person name="Miner T.L."/>
            <person name="Nash W.E."/>
            <person name="Cordes M."/>
            <person name="Du H."/>
            <person name="Sun H."/>
            <person name="Edwards J."/>
            <person name="Bradshaw-Cordum H."/>
            <person name="Ali J."/>
            <person name="Andrews S."/>
            <person name="Isak A."/>
            <person name="Vanbrunt A."/>
            <person name="Nguyen C."/>
            <person name="Du F."/>
            <person name="Lamar B."/>
            <person name="Courtney L."/>
            <person name="Kalicki J."/>
            <person name="Ozersky P."/>
            <person name="Bielicki L."/>
            <person name="Scott K."/>
            <person name="Holmes A."/>
            <person name="Harkins R."/>
            <person name="Harris A."/>
            <person name="Strong C.M."/>
            <person name="Hou S."/>
            <person name="Tomlinson C."/>
            <person name="Dauphin-Kohlberg S."/>
            <person name="Kozlowicz-Reilly A."/>
            <person name="Leonard S."/>
            <person name="Rohlfing T."/>
            <person name="Rock S.M."/>
            <person name="Tin-Wollam A.-M."/>
            <person name="Abbott A."/>
            <person name="Minx P."/>
            <person name="Maupin R."/>
            <person name="Strowmatt C."/>
            <person name="Latreille P."/>
            <person name="Miller N."/>
            <person name="Johnson D."/>
            <person name="Murray J."/>
            <person name="Woessner J.P."/>
            <person name="Wendl M.C."/>
            <person name="Yang S.-P."/>
            <person name="Schultz B.R."/>
            <person name="Wallis J.W."/>
            <person name="Spieth J."/>
            <person name="Bieri T.A."/>
            <person name="Nelson J.O."/>
            <person name="Berkowicz N."/>
            <person name="Wohldmann P.E."/>
            <person name="Cook L.L."/>
            <person name="Hickenbotham M.T."/>
            <person name="Eldred J."/>
            <person name="Williams D."/>
            <person name="Bedell J.A."/>
            <person name="Mardis E.R."/>
            <person name="Clifton S.W."/>
            <person name="Chissoe S.L."/>
            <person name="Marra M.A."/>
            <person name="Raymond C."/>
            <person name="Haugen E."/>
            <person name="Gillett W."/>
            <person name="Zhou Y."/>
            <person name="James R."/>
            <person name="Phelps K."/>
            <person name="Iadanoto S."/>
            <person name="Bubb K."/>
            <person name="Simms E."/>
            <person name="Levy R."/>
            <person name="Clendenning J."/>
            <person name="Kaul R."/>
            <person name="Kent W.J."/>
            <person name="Furey T.S."/>
            <person name="Baertsch R.A."/>
            <person name="Brent M.R."/>
            <person name="Keibler E."/>
            <person name="Flicek P."/>
            <person name="Bork P."/>
            <person name="Suyama M."/>
            <person name="Bailey J.A."/>
            <person name="Portnoy M.E."/>
            <person name="Torrents D."/>
            <person name="Chinwalla A.T."/>
            <person name="Gish W.R."/>
            <person name="Eddy S.R."/>
            <person name="McPherson J.D."/>
            <person name="Olson M.V."/>
            <person name="Eichler E.E."/>
            <person name="Green E.D."/>
            <person name="Waterston R.H."/>
            <person name="Wilson R.K."/>
        </authorList>
    </citation>
    <scope>NUCLEOTIDE SEQUENCE [LARGE SCALE GENOMIC DNA]</scope>
</reference>
<reference key="4">
    <citation type="journal article" date="2003" name="Science">
        <title>Human chromosome 7: DNA sequence and biology.</title>
        <authorList>
            <person name="Scherer S.W."/>
            <person name="Cheung J."/>
            <person name="MacDonald J.R."/>
            <person name="Osborne L.R."/>
            <person name="Nakabayashi K."/>
            <person name="Herbrick J.-A."/>
            <person name="Carson A.R."/>
            <person name="Parker-Katiraee L."/>
            <person name="Skaug J."/>
            <person name="Khaja R."/>
            <person name="Zhang J."/>
            <person name="Hudek A.K."/>
            <person name="Li M."/>
            <person name="Haddad M."/>
            <person name="Duggan G.E."/>
            <person name="Fernandez B.A."/>
            <person name="Kanematsu E."/>
            <person name="Gentles S."/>
            <person name="Christopoulos C.C."/>
            <person name="Choufani S."/>
            <person name="Kwasnicka D."/>
            <person name="Zheng X.H."/>
            <person name="Lai Z."/>
            <person name="Nusskern D.R."/>
            <person name="Zhang Q."/>
            <person name="Gu Z."/>
            <person name="Lu F."/>
            <person name="Zeesman S."/>
            <person name="Nowaczyk M.J."/>
            <person name="Teshima I."/>
            <person name="Chitayat D."/>
            <person name="Shuman C."/>
            <person name="Weksberg R."/>
            <person name="Zackai E.H."/>
            <person name="Grebe T.A."/>
            <person name="Cox S.R."/>
            <person name="Kirkpatrick S.J."/>
            <person name="Rahman N."/>
            <person name="Friedman J.M."/>
            <person name="Heng H.H.Q."/>
            <person name="Pelicci P.G."/>
            <person name="Lo-Coco F."/>
            <person name="Belloni E."/>
            <person name="Shaffer L.G."/>
            <person name="Pober B."/>
            <person name="Morton C.C."/>
            <person name="Gusella J.F."/>
            <person name="Bruns G.A.P."/>
            <person name="Korf B.R."/>
            <person name="Quade B.J."/>
            <person name="Ligon A.H."/>
            <person name="Ferguson H."/>
            <person name="Higgins A.W."/>
            <person name="Leach N.T."/>
            <person name="Herrick S.R."/>
            <person name="Lemyre E."/>
            <person name="Farra C.G."/>
            <person name="Kim H.-G."/>
            <person name="Summers A.M."/>
            <person name="Gripp K.W."/>
            <person name="Roberts W."/>
            <person name="Szatmari P."/>
            <person name="Winsor E.J.T."/>
            <person name="Grzeschik K.-H."/>
            <person name="Teebi A."/>
            <person name="Minassian B.A."/>
            <person name="Kere J."/>
            <person name="Armengol L."/>
            <person name="Pujana M.A."/>
            <person name="Estivill X."/>
            <person name="Wilson M.D."/>
            <person name="Koop B.F."/>
            <person name="Tosi S."/>
            <person name="Moore G.E."/>
            <person name="Boright A.P."/>
            <person name="Zlotorynski E."/>
            <person name="Kerem B."/>
            <person name="Kroisel P.M."/>
            <person name="Petek E."/>
            <person name="Oscier D.G."/>
            <person name="Mould S.J."/>
            <person name="Doehner H."/>
            <person name="Doehner K."/>
            <person name="Rommens J.M."/>
            <person name="Vincent J.B."/>
            <person name="Venter J.C."/>
            <person name="Li P.W."/>
            <person name="Mural R.J."/>
            <person name="Adams M.D."/>
            <person name="Tsui L.-C."/>
        </authorList>
    </citation>
    <scope>NUCLEOTIDE SEQUENCE [LARGE SCALE GENOMIC DNA]</scope>
</reference>
<reference key="5">
    <citation type="submission" date="2005-07" db="EMBL/GenBank/DDBJ databases">
        <authorList>
            <person name="Mural R.J."/>
            <person name="Istrail S."/>
            <person name="Sutton G."/>
            <person name="Florea L."/>
            <person name="Halpern A.L."/>
            <person name="Mobarry C.M."/>
            <person name="Lippert R."/>
            <person name="Walenz B."/>
            <person name="Shatkay H."/>
            <person name="Dew I."/>
            <person name="Miller J.R."/>
            <person name="Flanigan M.J."/>
            <person name="Edwards N.J."/>
            <person name="Bolanos R."/>
            <person name="Fasulo D."/>
            <person name="Halldorsson B.V."/>
            <person name="Hannenhalli S."/>
            <person name="Turner R."/>
            <person name="Yooseph S."/>
            <person name="Lu F."/>
            <person name="Nusskern D.R."/>
            <person name="Shue B.C."/>
            <person name="Zheng X.H."/>
            <person name="Zhong F."/>
            <person name="Delcher A.L."/>
            <person name="Huson D.H."/>
            <person name="Kravitz S.A."/>
            <person name="Mouchard L."/>
            <person name="Reinert K."/>
            <person name="Remington K.A."/>
            <person name="Clark A.G."/>
            <person name="Waterman M.S."/>
            <person name="Eichler E.E."/>
            <person name="Adams M.D."/>
            <person name="Hunkapiller M.W."/>
            <person name="Myers E.W."/>
            <person name="Venter J.C."/>
        </authorList>
    </citation>
    <scope>NUCLEOTIDE SEQUENCE [LARGE SCALE GENOMIC DNA]</scope>
</reference>
<reference key="6">
    <citation type="journal article" date="2004" name="Genome Res.">
        <title>The status, quality, and expansion of the NIH full-length cDNA project: the Mammalian Gene Collection (MGC).</title>
        <authorList>
            <consortium name="The MGC Project Team"/>
        </authorList>
    </citation>
    <scope>NUCLEOTIDE SEQUENCE [LARGE SCALE MRNA]</scope>
    <scope>VARIANT SER-346</scope>
    <source>
        <tissue>Cerebellum</tissue>
    </source>
</reference>
<reference key="7">
    <citation type="journal article" date="2005" name="Proteins">
        <title>Structures of vertebrate hyaluronidases and their unique enzymatic mechanism of hydrolysis.</title>
        <authorList>
            <person name="Jedrzejas M.J."/>
            <person name="Stern R."/>
        </authorList>
    </citation>
    <scope>FUNCTION</scope>
    <scope>3D-STRUCTURE MODELING</scope>
</reference>
<reference key="8">
    <citation type="journal article" date="2009" name="Mol. Cell. Proteomics">
        <title>A strategy for precise and large scale identification of core fucosylated glycoproteins.</title>
        <authorList>
            <person name="Jia W."/>
            <person name="Lu Z."/>
            <person name="Fu Y."/>
            <person name="Wang H.P."/>
            <person name="Wang L.H."/>
            <person name="Chi H."/>
            <person name="Yuan Z.F."/>
            <person name="Zheng Z.B."/>
            <person name="Song L.N."/>
            <person name="Han H.H."/>
            <person name="Liang Y.M."/>
            <person name="Wang J.L."/>
            <person name="Cai Y."/>
            <person name="Zhang Y.K."/>
            <person name="Deng Y.L."/>
            <person name="Ying W.T."/>
            <person name="He S.M."/>
            <person name="Qian X.H."/>
        </authorList>
    </citation>
    <scope>GLYCOSYLATION AT ASN-177</scope>
</reference>
<accession>Q2M3T9</accession>
<accession>D0VXG1</accession>
<accession>Q9UL99</accession>
<accession>Q9Y6T9</accession>
<comment type="function">
    <text evidence="5 7">Endo-hyaluronidase that degrades hyaluronan to smaller oligosaccharide fragments. Also has chondroitin sulfate hydrolase activity, The best substrate being the galactosaminidic linkage in the sequence of a trisulfated tetrasaccharide.</text>
</comment>
<comment type="catalytic activity">
    <reaction>
        <text>Random hydrolysis of (1-&gt;4)-linkages between N-acetyl-beta-D-glucosamine and D-glucuronate residues in hyaluronate.</text>
        <dbReference type="EC" id="3.2.1.35"/>
    </reaction>
</comment>
<comment type="biophysicochemical properties">
    <phDependence>
        <text evidence="7">Optimum pH is 4.5-5 (for chondroitin sulfate hydrolase activity).</text>
    </phDependence>
    <temperatureDependence>
        <text evidence="7">Optimum temperature is 37 degrees Celsius.</text>
    </temperatureDependence>
</comment>
<comment type="interaction">
    <interactant intactId="EBI-20720959">
        <id>Q2M3T9</id>
    </interactant>
    <interactant intactId="EBI-1057431">
        <id>O14556</id>
        <label>GAPDHS</label>
    </interactant>
    <organismsDiffer>false</organismsDiffer>
    <experiments>2</experiments>
</comment>
<comment type="subcellular location">
    <subcellularLocation>
        <location evidence="8">Membrane</location>
        <topology evidence="8">Multi-pass membrane protein</topology>
    </subcellularLocation>
</comment>
<comment type="tissue specificity">
    <text evidence="3">Detected in placenta and skeletal muscle.</text>
</comment>
<comment type="similarity">
    <text evidence="8">Belongs to the glycosyl hydrolase 56 family.</text>
</comment>
<dbReference type="EC" id="3.2.1.35"/>
<dbReference type="EMBL" id="AF009010">
    <property type="protein sequence ID" value="AAC98883.1"/>
    <property type="molecule type" value="mRNA"/>
</dbReference>
<dbReference type="EMBL" id="AB470346">
    <property type="protein sequence ID" value="BAI49593.1"/>
    <property type="molecule type" value="mRNA"/>
</dbReference>
<dbReference type="EMBL" id="AC006029">
    <property type="protein sequence ID" value="AAD43186.1"/>
    <property type="molecule type" value="Genomic_DNA"/>
</dbReference>
<dbReference type="EMBL" id="CH236947">
    <property type="protein sequence ID" value="EAL24331.1"/>
    <property type="molecule type" value="Genomic_DNA"/>
</dbReference>
<dbReference type="EMBL" id="CH471070">
    <property type="protein sequence ID" value="EAW83603.1"/>
    <property type="molecule type" value="Genomic_DNA"/>
</dbReference>
<dbReference type="EMBL" id="BC104788">
    <property type="protein sequence ID" value="AAI04789.1"/>
    <property type="molecule type" value="mRNA"/>
</dbReference>
<dbReference type="EMBL" id="BC104790">
    <property type="protein sequence ID" value="AAI04791.1"/>
    <property type="molecule type" value="mRNA"/>
</dbReference>
<dbReference type="CCDS" id="CCDS5789.1"/>
<dbReference type="RefSeq" id="NP_036401.2">
    <property type="nucleotide sequence ID" value="NM_012269.3"/>
</dbReference>
<dbReference type="RefSeq" id="XP_011514292.1">
    <property type="nucleotide sequence ID" value="XM_011515990.2"/>
</dbReference>
<dbReference type="RefSeq" id="XP_016867400.1">
    <property type="nucleotide sequence ID" value="XM_017011911.1"/>
</dbReference>
<dbReference type="RefSeq" id="XP_047276049.1">
    <property type="nucleotide sequence ID" value="XM_047420093.1"/>
</dbReference>
<dbReference type="RefSeq" id="XP_047276050.1">
    <property type="nucleotide sequence ID" value="XM_047420094.1"/>
</dbReference>
<dbReference type="SMR" id="Q2M3T9"/>
<dbReference type="BioGRID" id="117097">
    <property type="interactions" value="11"/>
</dbReference>
<dbReference type="FunCoup" id="Q2M3T9">
    <property type="interactions" value="143"/>
</dbReference>
<dbReference type="IntAct" id="Q2M3T9">
    <property type="interactions" value="3"/>
</dbReference>
<dbReference type="MINT" id="Q2M3T9"/>
<dbReference type="STRING" id="9606.ENSP00000223026"/>
<dbReference type="DrugBank" id="DB08818">
    <property type="generic name" value="Hyaluronic acid"/>
</dbReference>
<dbReference type="CAZy" id="GH56">
    <property type="family name" value="Glycoside Hydrolase Family 56"/>
</dbReference>
<dbReference type="GlyConnect" id="1382">
    <property type="glycosylation" value="3 N-Linked glycans (1 site)"/>
</dbReference>
<dbReference type="GlyCosmos" id="Q2M3T9">
    <property type="glycosylation" value="5 sites, 3 glycans"/>
</dbReference>
<dbReference type="GlyGen" id="Q2M3T9">
    <property type="glycosylation" value="5 sites, 11 N-linked glycans (2 sites)"/>
</dbReference>
<dbReference type="iPTMnet" id="Q2M3T9"/>
<dbReference type="PhosphoSitePlus" id="Q2M3T9"/>
<dbReference type="BioMuta" id="HYAL4"/>
<dbReference type="DMDM" id="158564281"/>
<dbReference type="MassIVE" id="Q2M3T9"/>
<dbReference type="PaxDb" id="9606-ENSP00000223026"/>
<dbReference type="PeptideAtlas" id="Q2M3T9"/>
<dbReference type="ProteomicsDB" id="61382"/>
<dbReference type="Antibodypedia" id="31779">
    <property type="antibodies" value="81 antibodies from 17 providers"/>
</dbReference>
<dbReference type="DNASU" id="23553"/>
<dbReference type="Ensembl" id="ENST00000223026.9">
    <property type="protein sequence ID" value="ENSP00000223026.4"/>
    <property type="gene ID" value="ENSG00000106302.10"/>
</dbReference>
<dbReference type="Ensembl" id="ENST00000476325.5">
    <property type="protein sequence ID" value="ENSP00000417186.1"/>
    <property type="gene ID" value="ENSG00000106302.10"/>
</dbReference>
<dbReference type="GeneID" id="23553"/>
<dbReference type="KEGG" id="hsa:23553"/>
<dbReference type="MANE-Select" id="ENST00000223026.9">
    <property type="protein sequence ID" value="ENSP00000223026.4"/>
    <property type="RefSeq nucleotide sequence ID" value="NM_012269.3"/>
    <property type="RefSeq protein sequence ID" value="NP_036401.2"/>
</dbReference>
<dbReference type="UCSC" id="uc003vlc.4">
    <property type="organism name" value="human"/>
</dbReference>
<dbReference type="AGR" id="HGNC:5323"/>
<dbReference type="CTD" id="23553"/>
<dbReference type="DisGeNET" id="23553"/>
<dbReference type="GeneCards" id="HYAL4"/>
<dbReference type="HGNC" id="HGNC:5323">
    <property type="gene designation" value="HYAL4"/>
</dbReference>
<dbReference type="HPA" id="ENSG00000106302">
    <property type="expression patterns" value="Tissue enhanced (placenta, skeletal muscle)"/>
</dbReference>
<dbReference type="MIM" id="604510">
    <property type="type" value="gene"/>
</dbReference>
<dbReference type="neXtProt" id="NX_Q2M3T9"/>
<dbReference type="OpenTargets" id="ENSG00000106302"/>
<dbReference type="PharmGKB" id="PA29574"/>
<dbReference type="VEuPathDB" id="HostDB:ENSG00000106302"/>
<dbReference type="eggNOG" id="ENOG502QPZH">
    <property type="taxonomic scope" value="Eukaryota"/>
</dbReference>
<dbReference type="GeneTree" id="ENSGT01020000230364"/>
<dbReference type="HOGENOM" id="CLU_036366_0_0_1"/>
<dbReference type="InParanoid" id="Q2M3T9"/>
<dbReference type="OMA" id="CAKAFMK"/>
<dbReference type="OrthoDB" id="5796153at2759"/>
<dbReference type="PAN-GO" id="Q2M3T9">
    <property type="GO annotations" value="3 GO annotations based on evolutionary models"/>
</dbReference>
<dbReference type="PhylomeDB" id="Q2M3T9"/>
<dbReference type="TreeFam" id="TF321598"/>
<dbReference type="BioCyc" id="MetaCyc:HS02883-MONOMER"/>
<dbReference type="BRENDA" id="3.2.1.35">
    <property type="organism ID" value="2681"/>
</dbReference>
<dbReference type="PathwayCommons" id="Q2M3T9"/>
<dbReference type="SignaLink" id="Q2M3T9"/>
<dbReference type="BioGRID-ORCS" id="23553">
    <property type="hits" value="17 hits in 1143 CRISPR screens"/>
</dbReference>
<dbReference type="ChiTaRS" id="HYAL4">
    <property type="organism name" value="human"/>
</dbReference>
<dbReference type="GenomeRNAi" id="23553"/>
<dbReference type="Pharos" id="Q2M3T9">
    <property type="development level" value="Tbio"/>
</dbReference>
<dbReference type="PRO" id="PR:Q2M3T9"/>
<dbReference type="Proteomes" id="UP000005640">
    <property type="component" value="Chromosome 7"/>
</dbReference>
<dbReference type="RNAct" id="Q2M3T9">
    <property type="molecule type" value="protein"/>
</dbReference>
<dbReference type="Bgee" id="ENSG00000106302">
    <property type="expression patterns" value="Expressed in primordial germ cell in gonad and 81 other cell types or tissues"/>
</dbReference>
<dbReference type="ExpressionAtlas" id="Q2M3T9">
    <property type="expression patterns" value="baseline and differential"/>
</dbReference>
<dbReference type="GO" id="GO:0009986">
    <property type="term" value="C:cell surface"/>
    <property type="evidence" value="ECO:0007669"/>
    <property type="project" value="Ensembl"/>
</dbReference>
<dbReference type="GO" id="GO:0031410">
    <property type="term" value="C:cytoplasmic vesicle"/>
    <property type="evidence" value="ECO:0000318"/>
    <property type="project" value="GO_Central"/>
</dbReference>
<dbReference type="GO" id="GO:0016020">
    <property type="term" value="C:membrane"/>
    <property type="evidence" value="ECO:0007669"/>
    <property type="project" value="UniProtKB-SubCell"/>
</dbReference>
<dbReference type="GO" id="GO:0004415">
    <property type="term" value="F:hyalurononglucosaminidase activity"/>
    <property type="evidence" value="ECO:0000318"/>
    <property type="project" value="GO_Central"/>
</dbReference>
<dbReference type="GO" id="GO:0005975">
    <property type="term" value="P:carbohydrate metabolic process"/>
    <property type="evidence" value="ECO:0007669"/>
    <property type="project" value="InterPro"/>
</dbReference>
<dbReference type="GO" id="GO:0030207">
    <property type="term" value="P:chondroitin sulfate proteoglycan catabolic process"/>
    <property type="evidence" value="ECO:0007669"/>
    <property type="project" value="Ensembl"/>
</dbReference>
<dbReference type="GO" id="GO:0006027">
    <property type="term" value="P:glycosaminoglycan catabolic process"/>
    <property type="evidence" value="ECO:0000304"/>
    <property type="project" value="ProtInc"/>
</dbReference>
<dbReference type="GO" id="GO:0030214">
    <property type="term" value="P:hyaluronan catabolic process"/>
    <property type="evidence" value="ECO:0000318"/>
    <property type="project" value="GO_Central"/>
</dbReference>
<dbReference type="FunFam" id="3.20.20.70:FF:000065">
    <property type="entry name" value="Hyaluronidase"/>
    <property type="match status" value="1"/>
</dbReference>
<dbReference type="Gene3D" id="3.20.20.70">
    <property type="entry name" value="Aldolase class I"/>
    <property type="match status" value="1"/>
</dbReference>
<dbReference type="InterPro" id="IPR013785">
    <property type="entry name" value="Aldolase_TIM"/>
</dbReference>
<dbReference type="InterPro" id="IPR017853">
    <property type="entry name" value="Glycoside_hydrolase_SF"/>
</dbReference>
<dbReference type="InterPro" id="IPR018155">
    <property type="entry name" value="Hyaluronidase"/>
</dbReference>
<dbReference type="PANTHER" id="PTHR11769">
    <property type="entry name" value="HYALURONIDASE"/>
    <property type="match status" value="1"/>
</dbReference>
<dbReference type="PANTHER" id="PTHR11769:SF7">
    <property type="entry name" value="HYALURONIDASE-4"/>
    <property type="match status" value="1"/>
</dbReference>
<dbReference type="Pfam" id="PF01630">
    <property type="entry name" value="Glyco_hydro_56"/>
    <property type="match status" value="1"/>
</dbReference>
<dbReference type="PIRSF" id="PIRSF038193">
    <property type="entry name" value="Hyaluronidase"/>
    <property type="match status" value="1"/>
</dbReference>
<dbReference type="PRINTS" id="PR00846">
    <property type="entry name" value="GLHYDRLASE56"/>
</dbReference>
<dbReference type="PRINTS" id="PR00848">
    <property type="entry name" value="SPERMPH20"/>
</dbReference>
<dbReference type="SUPFAM" id="SSF51445">
    <property type="entry name" value="(Trans)glycosidases"/>
    <property type="match status" value="1"/>
</dbReference>
<dbReference type="PROSITE" id="PS00022">
    <property type="entry name" value="EGF_1"/>
    <property type="match status" value="1"/>
</dbReference>
<dbReference type="PROSITE" id="PS01186">
    <property type="entry name" value="EGF_2"/>
    <property type="match status" value="1"/>
</dbReference>
<organism>
    <name type="scientific">Homo sapiens</name>
    <name type="common">Human</name>
    <dbReference type="NCBI Taxonomy" id="9606"/>
    <lineage>
        <taxon>Eukaryota</taxon>
        <taxon>Metazoa</taxon>
        <taxon>Chordata</taxon>
        <taxon>Craniata</taxon>
        <taxon>Vertebrata</taxon>
        <taxon>Euteleostomi</taxon>
        <taxon>Mammalia</taxon>
        <taxon>Eutheria</taxon>
        <taxon>Euarchontoglires</taxon>
        <taxon>Primates</taxon>
        <taxon>Haplorrhini</taxon>
        <taxon>Catarrhini</taxon>
        <taxon>Hominidae</taxon>
        <taxon>Homo</taxon>
    </lineage>
</organism>
<proteinExistence type="evidence at protein level"/>
<sequence>MKVLSEGQLKLCVVQPVHLTSWLLIFFILKSISCLKPARLPIYQRKPFIAAWNAPTDQCLIKYNLRLNLKMFPVIGSPLAKARGQNVTIFYVNRLGYYPWYTSQGVPINGGLPQNISLQVHLEKADQDINYYIPAEDFSGLAVIDWEYWRPQWARNWNSKDVYRQKSRKLISDMGKNVSATDIEYLAKVTFEESAKAFMKETIKLGIKSRPKGLWGYYLYPDCHNYNVYAPNYSGSCPEDEVLRNNELSWLWNSSAALYPSIGVWKSLGDSENILRFSKFRVHESMRISTMTSHDYALPVFVYTRLGYRDEPLFFLSKQDLVSTIGESAALGAAGIVIWGDMNLTASKANCTKVKQFVSSDLGSYIANVTRAAEVCSLHLCRNNGRCIRKMWNAPSYLHLNPASYHIEASEDGEFTVKGKASDTDLAVMADTFSCHCYQGYEGADCREIKTADGCSGVSPSPGSLMTLCLLLLASYRSIQL</sequence>